<sequence length="920" mass="104821">MPLKKLESSNNQDIIAEEVALLKEMLENITRRMIGDDAFTVIESIMVLSEKQDYIELEKVVANISNQEMEVISRYFSILPLLINISEDVDLAYEINYQNNTDTDYLGKLALTIKDLAGKDNGKDILEQVNVVPVLTAHPTQVQRKTILELTTHIHKLLRKYRDAKAGVINLEKWRQELYRYIEMIMQTDIIREKKLQVKNEIKNVMQYYDGSLIQAVTKLTTEYKNLAQKHGLELDNPKPITMGMWIGGDRDGNPFVTAETLCLSATVQSEVILNYYIDELAALYRTFSLSSTLVQPNSEVERLASLSQDQSIYRGNEPYRRAFHYIQSRLKQTQIQLTNQPAARMSSSVGLNTSAWSSPASLENPILAYDSPVDFKADLKAIEQSLLDNGNSALIEGDLREVMQAVDIFGFFLASIDMRQDSSVQEACVAELLKGANIVDDYSSLSETEKCDVLLQQLMEEPRTLSSAAVAKSDLLEKELAIYTTARELKDKLGEEVIKQHIISHTESVSDMFELAIMLKEVGLVDQQRARVQIVPLFETIEDLDNARDIMAAYLSHDIVKSWIATNRNYQEIMLGYSDSNKDGGYLASGWTLYKAQNELTAIGEEHGVKITFFHGRGGTVGRGGGPSYDAITSQPFGSIKDRIRLTEQGEIIENKYGNKDVAYYHLEMLISASINRMVTQMITDPNEIDSFREIMDSIVADSNIIYRKLVFDNPHFYDYFFEASPIKEVSSLNIGSRPAARKTITEITGLRAIPWVFSWSQNRIMFPGWYGVGSAFKRYIDRAQGNLERLQHMYQTWPFFHSLLSNVDMVLSKSNMNIAFQYAQLAERQDVRDVFYEILDEWQLTKNVILAIQDHDDLLEDNPSLKHSLKSRLPYFNVLNYIQIELIKRWRNNQLDENDEKLIHTTINGIATGLRNSG</sequence>
<keyword id="KW-0120">Carbon dioxide fixation</keyword>
<keyword id="KW-0456">Lyase</keyword>
<keyword id="KW-0460">Magnesium</keyword>
<keyword id="KW-1185">Reference proteome</keyword>
<protein>
    <recommendedName>
        <fullName evidence="1">Phosphoenolpyruvate carboxylase</fullName>
        <shortName evidence="1">PEPC</shortName>
        <shortName evidence="1">PEPCase</shortName>
        <ecNumber evidence="1">4.1.1.31</ecNumber>
    </recommendedName>
</protein>
<reference key="1">
    <citation type="journal article" date="2001" name="Proc. Natl. Acad. Sci. U.S.A.">
        <title>Complete genome sequence of an M1 strain of Streptococcus pyogenes.</title>
        <authorList>
            <person name="Ferretti J.J."/>
            <person name="McShan W.M."/>
            <person name="Ajdic D.J."/>
            <person name="Savic D.J."/>
            <person name="Savic G."/>
            <person name="Lyon K."/>
            <person name="Primeaux C."/>
            <person name="Sezate S."/>
            <person name="Suvorov A.N."/>
            <person name="Kenton S."/>
            <person name="Lai H.S."/>
            <person name="Lin S.P."/>
            <person name="Qian Y."/>
            <person name="Jia H.G."/>
            <person name="Najar F.Z."/>
            <person name="Ren Q."/>
            <person name="Zhu H."/>
            <person name="Song L."/>
            <person name="White J."/>
            <person name="Yuan X."/>
            <person name="Clifton S.W."/>
            <person name="Roe B.A."/>
            <person name="McLaughlin R.E."/>
        </authorList>
    </citation>
    <scope>NUCLEOTIDE SEQUENCE [LARGE SCALE GENOMIC DNA]</scope>
    <source>
        <strain>ATCC 700294 / SF370 / Serotype M1</strain>
    </source>
</reference>
<reference key="2">
    <citation type="submission" date="2014-04" db="EMBL/GenBank/DDBJ databases">
        <authorList>
            <person name="Beres S.B."/>
            <person name="Musser J.M."/>
        </authorList>
    </citation>
    <scope>SEQUENCE REVISION TO 345</scope>
</reference>
<reference key="3">
    <citation type="journal article" date="2005" name="J. Infect. Dis.">
        <title>Evolutionary origin and emergence of a highly successful clone of serotype M1 group A Streptococcus involved multiple horizontal gene transfer events.</title>
        <authorList>
            <person name="Sumby P."/>
            <person name="Porcella S.F."/>
            <person name="Madrigal A.G."/>
            <person name="Barbian K.D."/>
            <person name="Virtaneva K."/>
            <person name="Ricklefs S.M."/>
            <person name="Sturdevant D.E."/>
            <person name="Graham M.R."/>
            <person name="Vuopio-Varkila J."/>
            <person name="Hoe N.P."/>
            <person name="Musser J.M."/>
        </authorList>
    </citation>
    <scope>NUCLEOTIDE SEQUENCE [LARGE SCALE GENOMIC DNA]</scope>
    <source>
        <strain>ATCC BAA-947 / MGAS5005 / Serotype M1</strain>
    </source>
</reference>
<comment type="function">
    <text evidence="1">Forms oxaloacetate, a four-carbon dicarboxylic acid source for the tricarboxylic acid cycle.</text>
</comment>
<comment type="catalytic activity">
    <reaction evidence="1">
        <text>oxaloacetate + phosphate = phosphoenolpyruvate + hydrogencarbonate</text>
        <dbReference type="Rhea" id="RHEA:28370"/>
        <dbReference type="ChEBI" id="CHEBI:16452"/>
        <dbReference type="ChEBI" id="CHEBI:17544"/>
        <dbReference type="ChEBI" id="CHEBI:43474"/>
        <dbReference type="ChEBI" id="CHEBI:58702"/>
        <dbReference type="EC" id="4.1.1.31"/>
    </reaction>
</comment>
<comment type="cofactor">
    <cofactor evidence="1">
        <name>Mg(2+)</name>
        <dbReference type="ChEBI" id="CHEBI:18420"/>
    </cofactor>
</comment>
<comment type="similarity">
    <text evidence="1">Belongs to the PEPCase type 1 family.</text>
</comment>
<comment type="sequence caution" evidence="2">
    <conflict type="erroneous initiation">
        <sequence resource="EMBL-CDS" id="AAZ51123"/>
    </conflict>
</comment>
<accession>Q9A0U7</accession>
<accession>Q48ZU5</accession>
<evidence type="ECO:0000255" key="1">
    <source>
        <dbReference type="HAMAP-Rule" id="MF_00595"/>
    </source>
</evidence>
<evidence type="ECO:0000305" key="2"/>
<name>CAPP_STRP1</name>
<organism>
    <name type="scientific">Streptococcus pyogenes serotype M1</name>
    <dbReference type="NCBI Taxonomy" id="301447"/>
    <lineage>
        <taxon>Bacteria</taxon>
        <taxon>Bacillati</taxon>
        <taxon>Bacillota</taxon>
        <taxon>Bacilli</taxon>
        <taxon>Lactobacillales</taxon>
        <taxon>Streptococcaceae</taxon>
        <taxon>Streptococcus</taxon>
    </lineage>
</organism>
<feature type="chain" id="PRO_0000166632" description="Phosphoenolpyruvate carboxylase">
    <location>
        <begin position="1"/>
        <end position="920"/>
    </location>
</feature>
<feature type="active site" evidence="1">
    <location>
        <position position="138"/>
    </location>
</feature>
<feature type="active site" evidence="1">
    <location>
        <position position="583"/>
    </location>
</feature>
<feature type="sequence conflict" description="In Ref. 3; AAZ51123." evidence="2" ref="3">
    <original>D</original>
    <variation>A</variation>
    <location>
        <position position="859"/>
    </location>
</feature>
<proteinExistence type="inferred from homology"/>
<dbReference type="EC" id="4.1.1.31" evidence="1"/>
<dbReference type="EMBL" id="AE004092">
    <property type="protein sequence ID" value="AAK33584.2"/>
    <property type="molecule type" value="Genomic_DNA"/>
</dbReference>
<dbReference type="EMBL" id="CP000017">
    <property type="protein sequence ID" value="AAZ51123.1"/>
    <property type="status" value="ALT_INIT"/>
    <property type="molecule type" value="Genomic_DNA"/>
</dbReference>
<dbReference type="RefSeq" id="NP_268863.2">
    <property type="nucleotide sequence ID" value="NC_002737.2"/>
</dbReference>
<dbReference type="SMR" id="Q9A0U7"/>
<dbReference type="PaxDb" id="1314-HKU360_00517"/>
<dbReference type="KEGG" id="spy:SPy_0608"/>
<dbReference type="KEGG" id="spz:M5005_Spy0505"/>
<dbReference type="PATRIC" id="fig|160490.10.peg.520"/>
<dbReference type="HOGENOM" id="CLU_006557_2_0_9"/>
<dbReference type="Proteomes" id="UP000000750">
    <property type="component" value="Chromosome"/>
</dbReference>
<dbReference type="GO" id="GO:0005829">
    <property type="term" value="C:cytosol"/>
    <property type="evidence" value="ECO:0007669"/>
    <property type="project" value="TreeGrafter"/>
</dbReference>
<dbReference type="GO" id="GO:0000287">
    <property type="term" value="F:magnesium ion binding"/>
    <property type="evidence" value="ECO:0007669"/>
    <property type="project" value="UniProtKB-UniRule"/>
</dbReference>
<dbReference type="GO" id="GO:0008964">
    <property type="term" value="F:phosphoenolpyruvate carboxylase activity"/>
    <property type="evidence" value="ECO:0007669"/>
    <property type="project" value="UniProtKB-UniRule"/>
</dbReference>
<dbReference type="GO" id="GO:0015977">
    <property type="term" value="P:carbon fixation"/>
    <property type="evidence" value="ECO:0007669"/>
    <property type="project" value="UniProtKB-UniRule"/>
</dbReference>
<dbReference type="GO" id="GO:0006107">
    <property type="term" value="P:oxaloacetate metabolic process"/>
    <property type="evidence" value="ECO:0007669"/>
    <property type="project" value="UniProtKB-UniRule"/>
</dbReference>
<dbReference type="GO" id="GO:0006099">
    <property type="term" value="P:tricarboxylic acid cycle"/>
    <property type="evidence" value="ECO:0007669"/>
    <property type="project" value="InterPro"/>
</dbReference>
<dbReference type="Gene3D" id="1.20.1440.90">
    <property type="entry name" value="Phosphoenolpyruvate/pyruvate domain"/>
    <property type="match status" value="1"/>
</dbReference>
<dbReference type="HAMAP" id="MF_00595">
    <property type="entry name" value="PEPcase_type1"/>
    <property type="match status" value="1"/>
</dbReference>
<dbReference type="InterPro" id="IPR021135">
    <property type="entry name" value="PEP_COase"/>
</dbReference>
<dbReference type="InterPro" id="IPR022805">
    <property type="entry name" value="PEP_COase_bac/pln-type"/>
</dbReference>
<dbReference type="InterPro" id="IPR018129">
    <property type="entry name" value="PEP_COase_Lys_AS"/>
</dbReference>
<dbReference type="InterPro" id="IPR033129">
    <property type="entry name" value="PEPCASE_His_AS"/>
</dbReference>
<dbReference type="InterPro" id="IPR015813">
    <property type="entry name" value="Pyrv/PenolPyrv_kinase-like_dom"/>
</dbReference>
<dbReference type="NCBIfam" id="NF000584">
    <property type="entry name" value="PRK00009.1"/>
    <property type="match status" value="1"/>
</dbReference>
<dbReference type="PANTHER" id="PTHR30523">
    <property type="entry name" value="PHOSPHOENOLPYRUVATE CARBOXYLASE"/>
    <property type="match status" value="1"/>
</dbReference>
<dbReference type="PANTHER" id="PTHR30523:SF6">
    <property type="entry name" value="PHOSPHOENOLPYRUVATE CARBOXYLASE"/>
    <property type="match status" value="1"/>
</dbReference>
<dbReference type="Pfam" id="PF00311">
    <property type="entry name" value="PEPcase"/>
    <property type="match status" value="1"/>
</dbReference>
<dbReference type="PRINTS" id="PR00150">
    <property type="entry name" value="PEPCARBXLASE"/>
</dbReference>
<dbReference type="SUPFAM" id="SSF51621">
    <property type="entry name" value="Phosphoenolpyruvate/pyruvate domain"/>
    <property type="match status" value="1"/>
</dbReference>
<dbReference type="PROSITE" id="PS00781">
    <property type="entry name" value="PEPCASE_1"/>
    <property type="match status" value="1"/>
</dbReference>
<dbReference type="PROSITE" id="PS00393">
    <property type="entry name" value="PEPCASE_2"/>
    <property type="match status" value="1"/>
</dbReference>
<gene>
    <name evidence="1" type="primary">ppc</name>
    <name type="ordered locus">SPy_0608</name>
    <name type="ordered locus">M5005_Spy0505</name>
</gene>